<comment type="function">
    <text evidence="1">Component of the ERMES/MDM complex, which serves as a molecular tether to connect the endoplasmic reticulum (ER) and mitochondria. Components of this complex are involved in the control of mitochondrial shape and protein biogenesis, and function in nonvesicular lipid trafficking between the ER and mitochondria. MDM12 is required for the interaction of the ER-resident membrane protein MMM1 and the outer mitochondrial membrane-resident beta-barrel protein MDM10. The MDM12-MMM1 subcomplex functions in the major beta-barrel assembly pathway that is responsible for biogenesis of all mitochondrial outer membrane beta-barrel proteins, and acts in a late step after the SAM complex. The MDM10-MDM12-MMM1 subcomplex further acts in the TOM40-specific pathway after the action of the MDM12-MMM1 complex. Essential for establishing and maintaining the structure of mitochondria and maintenance of mtDNA nucleoids.</text>
</comment>
<comment type="subunit">
    <text evidence="1">Component of the ER-mitochondria encounter structure (ERMES) or MDM complex, composed of MMM1, MDM10, MDM12 and MDM34. A MMM1 homodimer associates with one molecule of MDM12 on each side in a pairwise head-to-tail manner, and the SMP-LTD domains of MMM1 and MDM12 generate a continuous hydrophobic tunnel for phospholipid trafficking.</text>
</comment>
<comment type="subcellular location">
    <subcellularLocation>
        <location evidence="1">Mitochondrion outer membrane</location>
        <topology evidence="1">Peripheral membrane protein</topology>
        <orientation evidence="1">Cytoplasmic side</orientation>
    </subcellularLocation>
    <subcellularLocation>
        <location evidence="1">Endoplasmic reticulum membrane</location>
        <topology evidence="1">Peripheral membrane protein</topology>
        <orientation evidence="1">Cytoplasmic side</orientation>
    </subcellularLocation>
    <text evidence="1">The ERMES/MDM complex localizes to a few discrete foci (around 10 per single cell), that represent mitochondria-endoplasmic reticulum junctions. These foci are often found next to mtDNA nucleoids.</text>
</comment>
<comment type="domain">
    <text evidence="1">The SMP-LTD domain is a barrel-like domain that can bind various types of glycerophospholipids in its interior and mediate their transfer between two adjacent bilayers.</text>
</comment>
<comment type="similarity">
    <text evidence="1">Belongs to the MDM12 family.</text>
</comment>
<name>MDM12_COPC7</name>
<protein>
    <recommendedName>
        <fullName evidence="1">Mitochondrial distribution and morphology protein 12</fullName>
    </recommendedName>
    <alternativeName>
        <fullName evidence="1">Mitochondrial inheritance component MDM12</fullName>
    </alternativeName>
</protein>
<gene>
    <name evidence="1" type="primary">MDM12</name>
    <name type="ORF">CC1G_01074</name>
</gene>
<dbReference type="EMBL" id="AACS02000002">
    <property type="protein sequence ID" value="EAU88701.2"/>
    <property type="molecule type" value="Genomic_DNA"/>
</dbReference>
<dbReference type="RefSeq" id="XP_001833012.2">
    <property type="nucleotide sequence ID" value="XM_001832960.2"/>
</dbReference>
<dbReference type="FunCoup" id="A8NEF5">
    <property type="interactions" value="39"/>
</dbReference>
<dbReference type="STRING" id="240176.A8NEF5"/>
<dbReference type="GeneID" id="6009503"/>
<dbReference type="KEGG" id="cci:CC1G_01074"/>
<dbReference type="VEuPathDB" id="FungiDB:CC1G_01074"/>
<dbReference type="eggNOG" id="ENOG502S1MJ">
    <property type="taxonomic scope" value="Eukaryota"/>
</dbReference>
<dbReference type="HOGENOM" id="CLU_026794_1_0_1"/>
<dbReference type="InParanoid" id="A8NEF5"/>
<dbReference type="OMA" id="AAWPSWI"/>
<dbReference type="OrthoDB" id="3356905at2759"/>
<dbReference type="Proteomes" id="UP000001861">
    <property type="component" value="Unassembled WGS sequence"/>
</dbReference>
<dbReference type="GO" id="GO:0005789">
    <property type="term" value="C:endoplasmic reticulum membrane"/>
    <property type="evidence" value="ECO:0007669"/>
    <property type="project" value="UniProtKB-SubCell"/>
</dbReference>
<dbReference type="GO" id="GO:0032865">
    <property type="term" value="C:ERMES complex"/>
    <property type="evidence" value="ECO:0007669"/>
    <property type="project" value="UniProtKB-UniRule"/>
</dbReference>
<dbReference type="GO" id="GO:0008289">
    <property type="term" value="F:lipid binding"/>
    <property type="evidence" value="ECO:0007669"/>
    <property type="project" value="UniProtKB-KW"/>
</dbReference>
<dbReference type="GO" id="GO:0000002">
    <property type="term" value="P:mitochondrial genome maintenance"/>
    <property type="evidence" value="ECO:0007669"/>
    <property type="project" value="UniProtKB-UniRule"/>
</dbReference>
<dbReference type="GO" id="GO:1990456">
    <property type="term" value="P:mitochondrion-endoplasmic reticulum membrane tethering"/>
    <property type="evidence" value="ECO:0007669"/>
    <property type="project" value="TreeGrafter"/>
</dbReference>
<dbReference type="GO" id="GO:0015914">
    <property type="term" value="P:phospholipid transport"/>
    <property type="evidence" value="ECO:0007669"/>
    <property type="project" value="TreeGrafter"/>
</dbReference>
<dbReference type="GO" id="GO:0045040">
    <property type="term" value="P:protein insertion into mitochondrial outer membrane"/>
    <property type="evidence" value="ECO:0007669"/>
    <property type="project" value="UniProtKB-UniRule"/>
</dbReference>
<dbReference type="CDD" id="cd21672">
    <property type="entry name" value="SMP_Mdm12"/>
    <property type="match status" value="1"/>
</dbReference>
<dbReference type="HAMAP" id="MF_03104">
    <property type="entry name" value="Mdm12"/>
    <property type="match status" value="1"/>
</dbReference>
<dbReference type="InterPro" id="IPR027532">
    <property type="entry name" value="Mdm12"/>
</dbReference>
<dbReference type="InterPro" id="IPR019411">
    <property type="entry name" value="MMM1_dom"/>
</dbReference>
<dbReference type="InterPro" id="IPR031468">
    <property type="entry name" value="SMP_LBD"/>
</dbReference>
<dbReference type="PANTHER" id="PTHR28204">
    <property type="entry name" value="MITOCHONDRIAL DISTRIBUTION AND MORPHOLOGY PROTEIN 12"/>
    <property type="match status" value="1"/>
</dbReference>
<dbReference type="PANTHER" id="PTHR28204:SF1">
    <property type="entry name" value="MITOCHONDRIAL DISTRIBUTION AND MORPHOLOGY PROTEIN 12"/>
    <property type="match status" value="1"/>
</dbReference>
<dbReference type="Pfam" id="PF10296">
    <property type="entry name" value="MMM1"/>
    <property type="match status" value="1"/>
</dbReference>
<dbReference type="PROSITE" id="PS51847">
    <property type="entry name" value="SMP"/>
    <property type="match status" value="1"/>
</dbReference>
<accession>A8NEF5</accession>
<proteinExistence type="inferred from homology"/>
<keyword id="KW-0256">Endoplasmic reticulum</keyword>
<keyword id="KW-0445">Lipid transport</keyword>
<keyword id="KW-0446">Lipid-binding</keyword>
<keyword id="KW-0472">Membrane</keyword>
<keyword id="KW-0496">Mitochondrion</keyword>
<keyword id="KW-1000">Mitochondrion outer membrane</keyword>
<keyword id="KW-1185">Reference proteome</keyword>
<keyword id="KW-0813">Transport</keyword>
<organism>
    <name type="scientific">Coprinopsis cinerea (strain Okayama-7 / 130 / ATCC MYA-4618 / FGSC 9003)</name>
    <name type="common">Inky cap fungus</name>
    <name type="synonym">Hormographiella aspergillata</name>
    <dbReference type="NCBI Taxonomy" id="240176"/>
    <lineage>
        <taxon>Eukaryota</taxon>
        <taxon>Fungi</taxon>
        <taxon>Dikarya</taxon>
        <taxon>Basidiomycota</taxon>
        <taxon>Agaricomycotina</taxon>
        <taxon>Agaricomycetes</taxon>
        <taxon>Agaricomycetidae</taxon>
        <taxon>Agaricales</taxon>
        <taxon>Agaricineae</taxon>
        <taxon>Psathyrellaceae</taxon>
        <taxon>Coprinopsis</taxon>
    </lineage>
</organism>
<feature type="chain" id="PRO_0000384284" description="Mitochondrial distribution and morphology protein 12">
    <location>
        <begin position="1"/>
        <end position="412"/>
    </location>
</feature>
<feature type="domain" description="SMP-LTD" evidence="1">
    <location>
        <begin position="1"/>
        <end position="410"/>
    </location>
</feature>
<feature type="region of interest" description="Disordered" evidence="2">
    <location>
        <begin position="66"/>
        <end position="96"/>
    </location>
</feature>
<feature type="region of interest" description="Disordered" evidence="2">
    <location>
        <begin position="108"/>
        <end position="136"/>
    </location>
</feature>
<feature type="region of interest" description="Disordered" evidence="2">
    <location>
        <begin position="166"/>
        <end position="238"/>
    </location>
</feature>
<feature type="region of interest" description="Disordered" evidence="2">
    <location>
        <begin position="314"/>
        <end position="354"/>
    </location>
</feature>
<feature type="compositionally biased region" description="Low complexity" evidence="2">
    <location>
        <begin position="220"/>
        <end position="238"/>
    </location>
</feature>
<reference key="1">
    <citation type="journal article" date="2010" name="Proc. Natl. Acad. Sci. U.S.A.">
        <title>Insights into evolution of multicellular fungi from the assembled chromosomes of the mushroom Coprinopsis cinerea (Coprinus cinereus).</title>
        <authorList>
            <person name="Stajich J.E."/>
            <person name="Wilke S.K."/>
            <person name="Ahren D."/>
            <person name="Au C.H."/>
            <person name="Birren B.W."/>
            <person name="Borodovsky M."/>
            <person name="Burns C."/>
            <person name="Canbaeck B."/>
            <person name="Casselton L.A."/>
            <person name="Cheng C.K."/>
            <person name="Deng J."/>
            <person name="Dietrich F.S."/>
            <person name="Fargo D.C."/>
            <person name="Farman M.L."/>
            <person name="Gathman A.C."/>
            <person name="Goldberg J."/>
            <person name="Guigo R."/>
            <person name="Hoegger P.J."/>
            <person name="Hooker J.B."/>
            <person name="Huggins A."/>
            <person name="James T.Y."/>
            <person name="Kamada T."/>
            <person name="Kilaru S."/>
            <person name="Kodira C."/>
            <person name="Kuees U."/>
            <person name="Kupfer D."/>
            <person name="Kwan H.S."/>
            <person name="Lomsadze A."/>
            <person name="Li W."/>
            <person name="Lilly W.W."/>
            <person name="Ma L.-J."/>
            <person name="Mackey A.J."/>
            <person name="Manning G."/>
            <person name="Martin F."/>
            <person name="Muraguchi H."/>
            <person name="Natvig D.O."/>
            <person name="Palmerini H."/>
            <person name="Ramesh M.A."/>
            <person name="Rehmeyer C.J."/>
            <person name="Roe B.A."/>
            <person name="Shenoy N."/>
            <person name="Stanke M."/>
            <person name="Ter-Hovhannisyan V."/>
            <person name="Tunlid A."/>
            <person name="Velagapudi R."/>
            <person name="Vision T.J."/>
            <person name="Zeng Q."/>
            <person name="Zolan M.E."/>
            <person name="Pukkila P.J."/>
        </authorList>
    </citation>
    <scope>NUCLEOTIDE SEQUENCE [LARGE SCALE GENOMIC DNA]</scope>
    <source>
        <strain>Okayama-7 / 130 / ATCC MYA-4618 / FGSC 9003</strain>
    </source>
</reference>
<sequence length="412" mass="45338">MSIDLEWAKLDSSLANYLVDVLNRQLSNAQRPSFIGPVEVTSLEFGSASPDVELVDLRDIYRDFLEDDEDDSSTSPVKVTEGQLDAHGGEDDDGYEWVPRRAAAREYYTEGGGHGGNGSHLPMHLRHPPLRSSPTDTFSSLGHSMGMTMPVGLDMWTGHGALFHHQGSGGSPALAHGGPILRSPSPSTPFPVVHTPPLGRTPTAAYRSSSALDPDSSFLNQPVFPSQQPQQQQPQQENNHPNLQLHLQVNWHSNLRITITTSLLINYPSPMFMSLPIKLSVTGLVFNGELAVAYEGQRRRVHVCILDDLDPYGPAGDRPKREVDPDTLNDTAITPPDLDEDSPPNSGRPQKPLPIGQRLLPSIFIESEIGQADKHVLKNVTRVERFIQDVIRKTVEEELVFPNFHTLVMGDG</sequence>
<evidence type="ECO:0000255" key="1">
    <source>
        <dbReference type="HAMAP-Rule" id="MF_03104"/>
    </source>
</evidence>
<evidence type="ECO:0000256" key="2">
    <source>
        <dbReference type="SAM" id="MobiDB-lite"/>
    </source>
</evidence>